<gene>
    <name evidence="1" type="primary">rplA</name>
    <name type="ordered locus">mma_3423</name>
</gene>
<keyword id="KW-0678">Repressor</keyword>
<keyword id="KW-0687">Ribonucleoprotein</keyword>
<keyword id="KW-0689">Ribosomal protein</keyword>
<keyword id="KW-0694">RNA-binding</keyword>
<keyword id="KW-0699">rRNA-binding</keyword>
<keyword id="KW-0810">Translation regulation</keyword>
<keyword id="KW-0820">tRNA-binding</keyword>
<protein>
    <recommendedName>
        <fullName evidence="1">Large ribosomal subunit protein uL1</fullName>
    </recommendedName>
    <alternativeName>
        <fullName evidence="2">50S ribosomal protein L1</fullName>
    </alternativeName>
</protein>
<organism>
    <name type="scientific">Janthinobacterium sp. (strain Marseille)</name>
    <name type="common">Minibacterium massiliensis</name>
    <dbReference type="NCBI Taxonomy" id="375286"/>
    <lineage>
        <taxon>Bacteria</taxon>
        <taxon>Pseudomonadati</taxon>
        <taxon>Pseudomonadota</taxon>
        <taxon>Betaproteobacteria</taxon>
        <taxon>Burkholderiales</taxon>
        <taxon>Oxalobacteraceae</taxon>
        <taxon>Janthinobacterium</taxon>
    </lineage>
</organism>
<feature type="chain" id="PRO_0000308026" description="Large ribosomal subunit protein uL1">
    <location>
        <begin position="1"/>
        <end position="231"/>
    </location>
</feature>
<dbReference type="EMBL" id="CP000269">
    <property type="protein sequence ID" value="ABR88721.1"/>
    <property type="molecule type" value="Genomic_DNA"/>
</dbReference>
<dbReference type="RefSeq" id="WP_012081260.1">
    <property type="nucleotide sequence ID" value="NC_009659.1"/>
</dbReference>
<dbReference type="SMR" id="A6T3L6"/>
<dbReference type="STRING" id="375286.mma_3423"/>
<dbReference type="KEGG" id="mms:mma_3423"/>
<dbReference type="eggNOG" id="COG0081">
    <property type="taxonomic scope" value="Bacteria"/>
</dbReference>
<dbReference type="HOGENOM" id="CLU_062853_0_0_4"/>
<dbReference type="OrthoDB" id="9803740at2"/>
<dbReference type="Proteomes" id="UP000006388">
    <property type="component" value="Chromosome"/>
</dbReference>
<dbReference type="GO" id="GO:0022625">
    <property type="term" value="C:cytosolic large ribosomal subunit"/>
    <property type="evidence" value="ECO:0007669"/>
    <property type="project" value="TreeGrafter"/>
</dbReference>
<dbReference type="GO" id="GO:0019843">
    <property type="term" value="F:rRNA binding"/>
    <property type="evidence" value="ECO:0007669"/>
    <property type="project" value="UniProtKB-UniRule"/>
</dbReference>
<dbReference type="GO" id="GO:0003735">
    <property type="term" value="F:structural constituent of ribosome"/>
    <property type="evidence" value="ECO:0007669"/>
    <property type="project" value="InterPro"/>
</dbReference>
<dbReference type="GO" id="GO:0000049">
    <property type="term" value="F:tRNA binding"/>
    <property type="evidence" value="ECO:0007669"/>
    <property type="project" value="UniProtKB-KW"/>
</dbReference>
<dbReference type="GO" id="GO:0006417">
    <property type="term" value="P:regulation of translation"/>
    <property type="evidence" value="ECO:0007669"/>
    <property type="project" value="UniProtKB-KW"/>
</dbReference>
<dbReference type="GO" id="GO:0006412">
    <property type="term" value="P:translation"/>
    <property type="evidence" value="ECO:0007669"/>
    <property type="project" value="UniProtKB-UniRule"/>
</dbReference>
<dbReference type="CDD" id="cd00403">
    <property type="entry name" value="Ribosomal_L1"/>
    <property type="match status" value="1"/>
</dbReference>
<dbReference type="FunFam" id="3.40.50.790:FF:000001">
    <property type="entry name" value="50S ribosomal protein L1"/>
    <property type="match status" value="1"/>
</dbReference>
<dbReference type="Gene3D" id="3.30.190.20">
    <property type="match status" value="1"/>
</dbReference>
<dbReference type="Gene3D" id="3.40.50.790">
    <property type="match status" value="1"/>
</dbReference>
<dbReference type="HAMAP" id="MF_01318_B">
    <property type="entry name" value="Ribosomal_uL1_B"/>
    <property type="match status" value="1"/>
</dbReference>
<dbReference type="InterPro" id="IPR005878">
    <property type="entry name" value="Ribosom_uL1_bac-type"/>
</dbReference>
<dbReference type="InterPro" id="IPR002143">
    <property type="entry name" value="Ribosomal_uL1"/>
</dbReference>
<dbReference type="InterPro" id="IPR023674">
    <property type="entry name" value="Ribosomal_uL1-like"/>
</dbReference>
<dbReference type="InterPro" id="IPR028364">
    <property type="entry name" value="Ribosomal_uL1/biogenesis"/>
</dbReference>
<dbReference type="InterPro" id="IPR016095">
    <property type="entry name" value="Ribosomal_uL1_3-a/b-sand"/>
</dbReference>
<dbReference type="InterPro" id="IPR023673">
    <property type="entry name" value="Ribosomal_uL1_CS"/>
</dbReference>
<dbReference type="NCBIfam" id="TIGR01169">
    <property type="entry name" value="rplA_bact"/>
    <property type="match status" value="1"/>
</dbReference>
<dbReference type="PANTHER" id="PTHR36427">
    <property type="entry name" value="54S RIBOSOMAL PROTEIN L1, MITOCHONDRIAL"/>
    <property type="match status" value="1"/>
</dbReference>
<dbReference type="PANTHER" id="PTHR36427:SF3">
    <property type="entry name" value="LARGE RIBOSOMAL SUBUNIT PROTEIN UL1M"/>
    <property type="match status" value="1"/>
</dbReference>
<dbReference type="Pfam" id="PF00687">
    <property type="entry name" value="Ribosomal_L1"/>
    <property type="match status" value="1"/>
</dbReference>
<dbReference type="PIRSF" id="PIRSF002155">
    <property type="entry name" value="Ribosomal_L1"/>
    <property type="match status" value="1"/>
</dbReference>
<dbReference type="SUPFAM" id="SSF56808">
    <property type="entry name" value="Ribosomal protein L1"/>
    <property type="match status" value="1"/>
</dbReference>
<dbReference type="PROSITE" id="PS01199">
    <property type="entry name" value="RIBOSOMAL_L1"/>
    <property type="match status" value="1"/>
</dbReference>
<comment type="function">
    <text evidence="1">Binds directly to 23S rRNA. The L1 stalk is quite mobile in the ribosome, and is involved in E site tRNA release.</text>
</comment>
<comment type="function">
    <text evidence="1">Protein L1 is also a translational repressor protein, it controls the translation of the L11 operon by binding to its mRNA.</text>
</comment>
<comment type="subunit">
    <text evidence="1">Part of the 50S ribosomal subunit.</text>
</comment>
<comment type="similarity">
    <text evidence="1">Belongs to the universal ribosomal protein uL1 family.</text>
</comment>
<name>RL1_JANMA</name>
<reference key="1">
    <citation type="journal article" date="2007" name="PLoS Genet.">
        <title>Genome analysis of Minibacterium massiliensis highlights the convergent evolution of water-living bacteria.</title>
        <authorList>
            <person name="Audic S."/>
            <person name="Robert C."/>
            <person name="Campagna B."/>
            <person name="Parinello H."/>
            <person name="Claverie J.-M."/>
            <person name="Raoult D."/>
            <person name="Drancourt M."/>
        </authorList>
    </citation>
    <scope>NUCLEOTIDE SEQUENCE [LARGE SCALE GENOMIC DNA]</scope>
    <source>
        <strain>Marseille</strain>
    </source>
</reference>
<accession>A6T3L6</accession>
<evidence type="ECO:0000255" key="1">
    <source>
        <dbReference type="HAMAP-Rule" id="MF_01318"/>
    </source>
</evidence>
<evidence type="ECO:0000305" key="2"/>
<sequence>MAKLSKRVKAFKAKVDRTKAYPFDNAVALIKECASAKFDESIDISVQLGVDAKKSDQVVRGSVVLPAGTGKSVRVAVFATGEKAGQAKAAGADIVGMDDLAEQIKAGNMPFDIVIASPDTMRIVGTLGQILGPRGMMPNPKVGTVTPDVATAVKNAKAGQVQYRTDKAGIIHATIGRKSFSDEALKSNLLALIDALNKAKPATSKGVYLRKVSLSSTMGAGVRVDQSTLAA</sequence>
<proteinExistence type="inferred from homology"/>